<accession>B1I8J9</accession>
<feature type="chain" id="PRO_1000142193" description="Large ribosomal subunit protein uL4">
    <location>
        <begin position="1"/>
        <end position="207"/>
    </location>
</feature>
<feature type="region of interest" description="Disordered" evidence="2">
    <location>
        <begin position="49"/>
        <end position="78"/>
    </location>
</feature>
<keyword id="KW-0687">Ribonucleoprotein</keyword>
<keyword id="KW-0689">Ribosomal protein</keyword>
<keyword id="KW-0694">RNA-binding</keyword>
<keyword id="KW-0699">rRNA-binding</keyword>
<dbReference type="EMBL" id="CP000936">
    <property type="protein sequence ID" value="ACA36255.1"/>
    <property type="molecule type" value="Genomic_DNA"/>
</dbReference>
<dbReference type="RefSeq" id="WP_000024543.1">
    <property type="nucleotide sequence ID" value="NC_010380.1"/>
</dbReference>
<dbReference type="SMR" id="B1I8J9"/>
<dbReference type="GeneID" id="45652308"/>
<dbReference type="KEGG" id="spv:SPH_0324"/>
<dbReference type="HOGENOM" id="CLU_041575_5_2_9"/>
<dbReference type="Proteomes" id="UP000002163">
    <property type="component" value="Chromosome"/>
</dbReference>
<dbReference type="GO" id="GO:1990904">
    <property type="term" value="C:ribonucleoprotein complex"/>
    <property type="evidence" value="ECO:0007669"/>
    <property type="project" value="UniProtKB-KW"/>
</dbReference>
<dbReference type="GO" id="GO:0005840">
    <property type="term" value="C:ribosome"/>
    <property type="evidence" value="ECO:0007669"/>
    <property type="project" value="UniProtKB-KW"/>
</dbReference>
<dbReference type="GO" id="GO:0019843">
    <property type="term" value="F:rRNA binding"/>
    <property type="evidence" value="ECO:0007669"/>
    <property type="project" value="UniProtKB-UniRule"/>
</dbReference>
<dbReference type="GO" id="GO:0003735">
    <property type="term" value="F:structural constituent of ribosome"/>
    <property type="evidence" value="ECO:0007669"/>
    <property type="project" value="InterPro"/>
</dbReference>
<dbReference type="GO" id="GO:0006412">
    <property type="term" value="P:translation"/>
    <property type="evidence" value="ECO:0007669"/>
    <property type="project" value="UniProtKB-UniRule"/>
</dbReference>
<dbReference type="FunFam" id="3.40.1370.10:FF:000003">
    <property type="entry name" value="50S ribosomal protein L4"/>
    <property type="match status" value="1"/>
</dbReference>
<dbReference type="Gene3D" id="3.40.1370.10">
    <property type="match status" value="1"/>
</dbReference>
<dbReference type="HAMAP" id="MF_01328_B">
    <property type="entry name" value="Ribosomal_uL4_B"/>
    <property type="match status" value="1"/>
</dbReference>
<dbReference type="InterPro" id="IPR002136">
    <property type="entry name" value="Ribosomal_uL4"/>
</dbReference>
<dbReference type="InterPro" id="IPR013005">
    <property type="entry name" value="Ribosomal_uL4-like"/>
</dbReference>
<dbReference type="InterPro" id="IPR023574">
    <property type="entry name" value="Ribosomal_uL4_dom_sf"/>
</dbReference>
<dbReference type="NCBIfam" id="TIGR03953">
    <property type="entry name" value="rplD_bact"/>
    <property type="match status" value="1"/>
</dbReference>
<dbReference type="PANTHER" id="PTHR10746">
    <property type="entry name" value="50S RIBOSOMAL PROTEIN L4"/>
    <property type="match status" value="1"/>
</dbReference>
<dbReference type="PANTHER" id="PTHR10746:SF6">
    <property type="entry name" value="LARGE RIBOSOMAL SUBUNIT PROTEIN UL4M"/>
    <property type="match status" value="1"/>
</dbReference>
<dbReference type="Pfam" id="PF00573">
    <property type="entry name" value="Ribosomal_L4"/>
    <property type="match status" value="1"/>
</dbReference>
<dbReference type="SUPFAM" id="SSF52166">
    <property type="entry name" value="Ribosomal protein L4"/>
    <property type="match status" value="1"/>
</dbReference>
<gene>
    <name evidence="1" type="primary">rplD</name>
    <name type="ordered locus">SPH_0324</name>
</gene>
<reference key="1">
    <citation type="journal article" date="2010" name="Genome Biol.">
        <title>Structure and dynamics of the pan-genome of Streptococcus pneumoniae and closely related species.</title>
        <authorList>
            <person name="Donati C."/>
            <person name="Hiller N.L."/>
            <person name="Tettelin H."/>
            <person name="Muzzi A."/>
            <person name="Croucher N.J."/>
            <person name="Angiuoli S.V."/>
            <person name="Oggioni M."/>
            <person name="Dunning Hotopp J.C."/>
            <person name="Hu F.Z."/>
            <person name="Riley D.R."/>
            <person name="Covacci A."/>
            <person name="Mitchell T.J."/>
            <person name="Bentley S.D."/>
            <person name="Kilian M."/>
            <person name="Ehrlich G.D."/>
            <person name="Rappuoli R."/>
            <person name="Moxon E.R."/>
            <person name="Masignani V."/>
        </authorList>
    </citation>
    <scope>NUCLEOTIDE SEQUENCE [LARGE SCALE GENOMIC DNA]</scope>
    <source>
        <strain>Hungary19A-6</strain>
    </source>
</reference>
<name>RL4_STRPI</name>
<comment type="function">
    <text evidence="1">One of the primary rRNA binding proteins, this protein initially binds near the 5'-end of the 23S rRNA. It is important during the early stages of 50S assembly. It makes multiple contacts with different domains of the 23S rRNA in the assembled 50S subunit and ribosome.</text>
</comment>
<comment type="function">
    <text evidence="1">Forms part of the polypeptide exit tunnel.</text>
</comment>
<comment type="subunit">
    <text evidence="1">Part of the 50S ribosomal subunit.</text>
</comment>
<comment type="similarity">
    <text evidence="1">Belongs to the universal ribosomal protein uL4 family.</text>
</comment>
<evidence type="ECO:0000255" key="1">
    <source>
        <dbReference type="HAMAP-Rule" id="MF_01328"/>
    </source>
</evidence>
<evidence type="ECO:0000256" key="2">
    <source>
        <dbReference type="SAM" id="MobiDB-lite"/>
    </source>
</evidence>
<evidence type="ECO:0000305" key="3"/>
<protein>
    <recommendedName>
        <fullName evidence="1">Large ribosomal subunit protein uL4</fullName>
    </recommendedName>
    <alternativeName>
        <fullName evidence="3">50S ribosomal protein L4</fullName>
    </alternativeName>
</protein>
<organism>
    <name type="scientific">Streptococcus pneumoniae (strain Hungary19A-6)</name>
    <dbReference type="NCBI Taxonomy" id="487214"/>
    <lineage>
        <taxon>Bacteria</taxon>
        <taxon>Bacillati</taxon>
        <taxon>Bacillota</taxon>
        <taxon>Bacilli</taxon>
        <taxon>Lactobacillales</taxon>
        <taxon>Streptococcaceae</taxon>
        <taxon>Streptococcus</taxon>
    </lineage>
</organism>
<sequence>MANVTLFDQTGKEAGQVVLSDAVFGIEPNESVVFDVIISQRASLRQGTHAVKNRSAVSGGGRKPWRQKGTGRARQGSIRSPQWRGGGVVFGPTPRSYGYKLPQKVRRLALKSVYSEKVAENKFVAVDALSFTAPKTAEFAKVLAALSIDSKVLVILEEGNEFAALSARNLPNVKVATATTASVLDIANSDKLLVTQAAISKIEEVLA</sequence>
<proteinExistence type="inferred from homology"/>